<comment type="function">
    <text evidence="1">Converts 2C-methyl-D-erythritol 2,4-cyclodiphosphate (ME-2,4cPP) into 1-hydroxy-2-methyl-2-(E)-butenyl 4-diphosphate.</text>
</comment>
<comment type="catalytic activity">
    <reaction evidence="1">
        <text>(2E)-4-hydroxy-3-methylbut-2-enyl diphosphate + oxidized [flavodoxin] + H2O + 2 H(+) = 2-C-methyl-D-erythritol 2,4-cyclic diphosphate + reduced [flavodoxin]</text>
        <dbReference type="Rhea" id="RHEA:43604"/>
        <dbReference type="Rhea" id="RHEA-COMP:10622"/>
        <dbReference type="Rhea" id="RHEA-COMP:10623"/>
        <dbReference type="ChEBI" id="CHEBI:15377"/>
        <dbReference type="ChEBI" id="CHEBI:15378"/>
        <dbReference type="ChEBI" id="CHEBI:57618"/>
        <dbReference type="ChEBI" id="CHEBI:58210"/>
        <dbReference type="ChEBI" id="CHEBI:58483"/>
        <dbReference type="ChEBI" id="CHEBI:128753"/>
        <dbReference type="EC" id="1.17.7.3"/>
    </reaction>
</comment>
<comment type="cofactor">
    <cofactor evidence="1">
        <name>[4Fe-4S] cluster</name>
        <dbReference type="ChEBI" id="CHEBI:49883"/>
    </cofactor>
    <text evidence="1">Binds 1 [4Fe-4S] cluster.</text>
</comment>
<comment type="pathway">
    <text evidence="1">Isoprenoid biosynthesis; isopentenyl diphosphate biosynthesis via DXP pathway; isopentenyl diphosphate from 1-deoxy-D-xylulose 5-phosphate: step 5/6.</text>
</comment>
<comment type="similarity">
    <text evidence="1">Belongs to the IspG family.</text>
</comment>
<feature type="chain" id="PRO_1000011444" description="4-hydroxy-3-methylbut-2-en-1-yl diphosphate synthase (flavodoxin)">
    <location>
        <begin position="1"/>
        <end position="433"/>
    </location>
</feature>
<feature type="region of interest" description="Disordered" evidence="2">
    <location>
        <begin position="1"/>
        <end position="23"/>
    </location>
</feature>
<feature type="compositionally biased region" description="Polar residues" evidence="2">
    <location>
        <begin position="1"/>
        <end position="13"/>
    </location>
</feature>
<feature type="binding site" evidence="1">
    <location>
        <position position="314"/>
    </location>
    <ligand>
        <name>[4Fe-4S] cluster</name>
        <dbReference type="ChEBI" id="CHEBI:49883"/>
    </ligand>
</feature>
<feature type="binding site" evidence="1">
    <location>
        <position position="317"/>
    </location>
    <ligand>
        <name>[4Fe-4S] cluster</name>
        <dbReference type="ChEBI" id="CHEBI:49883"/>
    </ligand>
</feature>
<feature type="binding site" evidence="1">
    <location>
        <position position="360"/>
    </location>
    <ligand>
        <name>[4Fe-4S] cluster</name>
        <dbReference type="ChEBI" id="CHEBI:49883"/>
    </ligand>
</feature>
<feature type="binding site" evidence="1">
    <location>
        <position position="367"/>
    </location>
    <ligand>
        <name>[4Fe-4S] cluster</name>
        <dbReference type="ChEBI" id="CHEBI:49883"/>
    </ligand>
</feature>
<evidence type="ECO:0000255" key="1">
    <source>
        <dbReference type="HAMAP-Rule" id="MF_00159"/>
    </source>
</evidence>
<evidence type="ECO:0000256" key="2">
    <source>
        <dbReference type="SAM" id="MobiDB-lite"/>
    </source>
</evidence>
<proteinExistence type="inferred from homology"/>
<keyword id="KW-0004">4Fe-4S</keyword>
<keyword id="KW-0408">Iron</keyword>
<keyword id="KW-0411">Iron-sulfur</keyword>
<keyword id="KW-0414">Isoprene biosynthesis</keyword>
<keyword id="KW-0479">Metal-binding</keyword>
<keyword id="KW-0560">Oxidoreductase</keyword>
<keyword id="KW-1185">Reference proteome</keyword>
<accession>A4YKQ8</accession>
<name>ISPG_BRASO</name>
<gene>
    <name evidence="1" type="primary">ispG</name>
    <name type="ordered locus">BRADO0546</name>
</gene>
<organism>
    <name type="scientific">Bradyrhizobium sp. (strain ORS 278)</name>
    <dbReference type="NCBI Taxonomy" id="114615"/>
    <lineage>
        <taxon>Bacteria</taxon>
        <taxon>Pseudomonadati</taxon>
        <taxon>Pseudomonadota</taxon>
        <taxon>Alphaproteobacteria</taxon>
        <taxon>Hyphomicrobiales</taxon>
        <taxon>Nitrobacteraceae</taxon>
        <taxon>Bradyrhizobium</taxon>
    </lineage>
</organism>
<sequence length="433" mass="45989">MNKPETVTENSLASDVAGPAPRHQTTKVMVGNVAVGGGAPIVVQSMTNTDTADVDSTVAQVAALARAGSEMVRITVDRDEAAAAVPHIREQLDKRGITTPLIGDFHYIGHKLLTEYPACAEALAKYRINPGNVGFKDKRDTQFSTIIELANKYGKPVRIGANWGSLDQELLSKLMDENAASANPRNARAVMREAMVQSALHSAERAQELGMPKDRIILSAKVSAVQDLIAVYQDLAARSDYAIHLGLTEAGMGSKGIVASSAALGILLQQGIGDTIRISLTPEPGGDRTLEVQVAQELLQTMGFRTFVPLVAACPGCGRTTSTTFQELARSIQDFIRDEMPTWKIKYPGVEALNVAVMGCIVNGPGESKHANIGISLPGTGEAPAAPVFVDGKKFRTLRGPTIAADFKALVIDYIDQRYGSGAKAPESVTAAE</sequence>
<protein>
    <recommendedName>
        <fullName evidence="1">4-hydroxy-3-methylbut-2-en-1-yl diphosphate synthase (flavodoxin)</fullName>
        <ecNumber evidence="1">1.17.7.3</ecNumber>
    </recommendedName>
    <alternativeName>
        <fullName evidence="1">1-hydroxy-2-methyl-2-(E)-butenyl 4-diphosphate synthase</fullName>
    </alternativeName>
</protein>
<reference key="1">
    <citation type="journal article" date="2007" name="Science">
        <title>Legumes symbioses: absence of nod genes in photosynthetic bradyrhizobia.</title>
        <authorList>
            <person name="Giraud E."/>
            <person name="Moulin L."/>
            <person name="Vallenet D."/>
            <person name="Barbe V."/>
            <person name="Cytryn E."/>
            <person name="Avarre J.-C."/>
            <person name="Jaubert M."/>
            <person name="Simon D."/>
            <person name="Cartieaux F."/>
            <person name="Prin Y."/>
            <person name="Bena G."/>
            <person name="Hannibal L."/>
            <person name="Fardoux J."/>
            <person name="Kojadinovic M."/>
            <person name="Vuillet L."/>
            <person name="Lajus A."/>
            <person name="Cruveiller S."/>
            <person name="Rouy Z."/>
            <person name="Mangenot S."/>
            <person name="Segurens B."/>
            <person name="Dossat C."/>
            <person name="Franck W.L."/>
            <person name="Chang W.-S."/>
            <person name="Saunders E."/>
            <person name="Bruce D."/>
            <person name="Richardson P."/>
            <person name="Normand P."/>
            <person name="Dreyfus B."/>
            <person name="Pignol D."/>
            <person name="Stacey G."/>
            <person name="Emerich D."/>
            <person name="Vermeglio A."/>
            <person name="Medigue C."/>
            <person name="Sadowsky M."/>
        </authorList>
    </citation>
    <scope>NUCLEOTIDE SEQUENCE [LARGE SCALE GENOMIC DNA]</scope>
    <source>
        <strain>ORS 278</strain>
    </source>
</reference>
<dbReference type="EC" id="1.17.7.3" evidence="1"/>
<dbReference type="EMBL" id="CU234118">
    <property type="protein sequence ID" value="CAL74484.1"/>
    <property type="molecule type" value="Genomic_DNA"/>
</dbReference>
<dbReference type="RefSeq" id="WP_011923755.1">
    <property type="nucleotide sequence ID" value="NC_009445.1"/>
</dbReference>
<dbReference type="SMR" id="A4YKQ8"/>
<dbReference type="STRING" id="114615.BRADO0546"/>
<dbReference type="KEGG" id="bra:BRADO0546"/>
<dbReference type="eggNOG" id="COG0821">
    <property type="taxonomic scope" value="Bacteria"/>
</dbReference>
<dbReference type="HOGENOM" id="CLU_042258_1_0_5"/>
<dbReference type="OrthoDB" id="9803214at2"/>
<dbReference type="UniPathway" id="UPA00056">
    <property type="reaction ID" value="UER00096"/>
</dbReference>
<dbReference type="Proteomes" id="UP000001994">
    <property type="component" value="Chromosome"/>
</dbReference>
<dbReference type="GO" id="GO:0051539">
    <property type="term" value="F:4 iron, 4 sulfur cluster binding"/>
    <property type="evidence" value="ECO:0007669"/>
    <property type="project" value="UniProtKB-UniRule"/>
</dbReference>
<dbReference type="GO" id="GO:0046429">
    <property type="term" value="F:4-hydroxy-3-methylbut-2-en-1-yl diphosphate synthase activity (ferredoxin)"/>
    <property type="evidence" value="ECO:0007669"/>
    <property type="project" value="UniProtKB-UniRule"/>
</dbReference>
<dbReference type="GO" id="GO:0141197">
    <property type="term" value="F:4-hydroxy-3-methylbut-2-enyl-diphosphate synthase activity (flavodoxin)"/>
    <property type="evidence" value="ECO:0007669"/>
    <property type="project" value="UniProtKB-EC"/>
</dbReference>
<dbReference type="GO" id="GO:0005506">
    <property type="term" value="F:iron ion binding"/>
    <property type="evidence" value="ECO:0007669"/>
    <property type="project" value="InterPro"/>
</dbReference>
<dbReference type="GO" id="GO:0019288">
    <property type="term" value="P:isopentenyl diphosphate biosynthetic process, methylerythritol 4-phosphate pathway"/>
    <property type="evidence" value="ECO:0007669"/>
    <property type="project" value="UniProtKB-UniRule"/>
</dbReference>
<dbReference type="GO" id="GO:0016114">
    <property type="term" value="P:terpenoid biosynthetic process"/>
    <property type="evidence" value="ECO:0007669"/>
    <property type="project" value="InterPro"/>
</dbReference>
<dbReference type="FunFam" id="3.20.20.20:FF:000001">
    <property type="entry name" value="4-hydroxy-3-methylbut-2-en-1-yl diphosphate synthase (flavodoxin)"/>
    <property type="match status" value="1"/>
</dbReference>
<dbReference type="FunFam" id="3.30.413.10:FF:000012">
    <property type="entry name" value="4-hydroxy-3-methylbut-2-en-1-yl diphosphate synthase (flavodoxin)"/>
    <property type="match status" value="1"/>
</dbReference>
<dbReference type="Gene3D" id="3.20.20.20">
    <property type="entry name" value="Dihydropteroate synthase-like"/>
    <property type="match status" value="1"/>
</dbReference>
<dbReference type="Gene3D" id="3.30.413.10">
    <property type="entry name" value="Sulfite Reductase Hemoprotein, domain 1"/>
    <property type="match status" value="1"/>
</dbReference>
<dbReference type="HAMAP" id="MF_00159">
    <property type="entry name" value="IspG"/>
    <property type="match status" value="1"/>
</dbReference>
<dbReference type="InterPro" id="IPR011005">
    <property type="entry name" value="Dihydropteroate_synth-like_sf"/>
</dbReference>
<dbReference type="InterPro" id="IPR016425">
    <property type="entry name" value="IspG_bac"/>
</dbReference>
<dbReference type="InterPro" id="IPR004588">
    <property type="entry name" value="IspG_bac-typ"/>
</dbReference>
<dbReference type="InterPro" id="IPR045854">
    <property type="entry name" value="NO2/SO3_Rdtase_4Fe4S_sf"/>
</dbReference>
<dbReference type="NCBIfam" id="TIGR00612">
    <property type="entry name" value="ispG_gcpE"/>
    <property type="match status" value="1"/>
</dbReference>
<dbReference type="NCBIfam" id="NF001540">
    <property type="entry name" value="PRK00366.1"/>
    <property type="match status" value="1"/>
</dbReference>
<dbReference type="PANTHER" id="PTHR30454">
    <property type="entry name" value="4-HYDROXY-3-METHYLBUT-2-EN-1-YL DIPHOSPHATE SYNTHASE"/>
    <property type="match status" value="1"/>
</dbReference>
<dbReference type="PANTHER" id="PTHR30454:SF0">
    <property type="entry name" value="4-HYDROXY-3-METHYLBUT-2-EN-1-YL DIPHOSPHATE SYNTHASE (FERREDOXIN), CHLOROPLASTIC"/>
    <property type="match status" value="1"/>
</dbReference>
<dbReference type="Pfam" id="PF04551">
    <property type="entry name" value="GcpE"/>
    <property type="match status" value="1"/>
</dbReference>
<dbReference type="PIRSF" id="PIRSF004640">
    <property type="entry name" value="IspG"/>
    <property type="match status" value="1"/>
</dbReference>